<proteinExistence type="inferred from homology"/>
<feature type="chain" id="PRO_0000232721" description="ATP synthase F(0) complex subunit 8">
    <location>
        <begin position="1"/>
        <end position="66"/>
    </location>
</feature>
<feature type="transmembrane region" description="Helical" evidence="4">
    <location>
        <begin position="8"/>
        <end position="24"/>
    </location>
</feature>
<feature type="modified residue" description="N6-acetyllysine; alternate" evidence="2">
    <location>
        <position position="54"/>
    </location>
</feature>
<feature type="modified residue" description="N6-succinyllysine; alternate" evidence="2">
    <location>
        <position position="54"/>
    </location>
</feature>
<feature type="modified residue" description="N6-acetyllysine" evidence="2">
    <location>
        <position position="57"/>
    </location>
</feature>
<comment type="function">
    <text evidence="1 3">Subunit 8, of the mitochondrial membrane ATP synthase complex (F(1)F(0) ATP synthase or Complex V) that produces ATP from ADP in the presence of a proton gradient across the membrane which is generated by electron transport complexes of the respiratory chain. ATP synthase complex consist of a soluble F(1) head domain - the catalytic core - and a membrane F(1) domain - the membrane proton channel. These two domains are linked by a central stalk rotating inside the F(1) region and a stationary peripheral stalk. During catalysis, ATP synthesis in the catalytic domain of F(1) is coupled via a rotary mechanism of the central stalk subunits to proton translocation (By similarity). In vivo, can only synthesize ATP although its ATP hydrolase activity can be activated artificially in vitro (By similarity). Part of the complex F(0) domain (By similarity).</text>
</comment>
<comment type="subunit">
    <text evidence="1">Component of the ATP synthase complex composed at least of ATP5F1A/subunit alpha, ATP5F1B/subunit beta, ATP5MC1/subunit c (homooctomer), MT-ATP6/subunit a, MT-ATP8/subunit 8, ATP5ME/subunit e, ATP5MF/subunit f, ATP5MG/subunit g, ATP5MK/subunit k, ATP5MJ/subunit j, ATP5F1C/subunit gamma, ATP5F1D/subunit delta, ATP5F1E/subunit epsilon, ATP5PF/subunit F6, ATP5PB/subunit b, ATP5PD/subunit d, ATP5PO/subunit OSCP. ATP synthase complex consists of a soluble F(1) head domain (subunits alpha(3) and beta(3)) - the catalytic core - and a membrane F(0) domain - the membrane proton channel (subunits c, a, 8, e, f, g, k and j). These two domains are linked by a central stalk (subunits gamma, delta, and epsilon) rotating inside the F1 region and a stationary peripheral stalk (subunits F6, b, d, and OSCP). Interacts with PRICKLE3.</text>
</comment>
<comment type="subcellular location">
    <subcellularLocation>
        <location>Mitochondrion membrane</location>
        <topology>Single-pass membrane protein</topology>
    </subcellularLocation>
</comment>
<comment type="similarity">
    <text evidence="5">Belongs to the ATPase protein 8 family.</text>
</comment>
<gene>
    <name evidence="1" type="primary">MT-ATP8</name>
    <name type="synonym">ATP8</name>
    <name type="synonym">ATPASE8</name>
    <name type="synonym">MTATP8</name>
</gene>
<protein>
    <recommendedName>
        <fullName evidence="1">ATP synthase F(0) complex subunit 8</fullName>
    </recommendedName>
    <alternativeName>
        <fullName>A6L</fullName>
    </alternativeName>
    <alternativeName>
        <fullName>F-ATPase subunit 8</fullName>
    </alternativeName>
</protein>
<dbReference type="EMBL" id="DQ188829">
    <property type="protein sequence ID" value="ABA29788.1"/>
    <property type="molecule type" value="Genomic_DNA"/>
</dbReference>
<dbReference type="EMBL" id="DQ316067">
    <property type="protein sequence ID" value="ABC17882.1"/>
    <property type="molecule type" value="Genomic_DNA"/>
</dbReference>
<dbReference type="RefSeq" id="YP_398758.1">
    <property type="nucleotide sequence ID" value="NC_007596.2"/>
</dbReference>
<dbReference type="GeneID" id="3773145"/>
<dbReference type="CTD" id="4509"/>
<dbReference type="GO" id="GO:0031966">
    <property type="term" value="C:mitochondrial membrane"/>
    <property type="evidence" value="ECO:0007669"/>
    <property type="project" value="UniProtKB-SubCell"/>
</dbReference>
<dbReference type="GO" id="GO:0045259">
    <property type="term" value="C:proton-transporting ATP synthase complex"/>
    <property type="evidence" value="ECO:0000250"/>
    <property type="project" value="UniProtKB"/>
</dbReference>
<dbReference type="GO" id="GO:0006754">
    <property type="term" value="P:ATP biosynthetic process"/>
    <property type="evidence" value="ECO:0007669"/>
    <property type="project" value="UniProtKB-KW"/>
</dbReference>
<dbReference type="GO" id="GO:1902600">
    <property type="term" value="P:proton transmembrane transport"/>
    <property type="evidence" value="ECO:0007669"/>
    <property type="project" value="UniProtKB-KW"/>
</dbReference>
<name>ATP8_MAMPR</name>
<reference key="1">
    <citation type="journal article" date="2006" name="Nature">
        <title>Multiplex amplification of the mammoth mitochondrial genome and the evolution of Elephantidae.</title>
        <authorList>
            <person name="Krause J."/>
            <person name="Dear P.H."/>
            <person name="Pollack J.L."/>
            <person name="Slatkin M."/>
            <person name="Spriggs H."/>
            <person name="Barnes I."/>
            <person name="Lister A.M."/>
            <person name="Ebersberger I."/>
            <person name="Paeaebo S."/>
            <person name="Hofreiter M."/>
        </authorList>
    </citation>
    <scope>NUCLEOTIDE SEQUENCE [GENOMIC DNA]</scope>
</reference>
<reference key="2">
    <citation type="journal article" date="2006" name="PLoS Biol.">
        <title>Complete mitochondrial genome and phylogeny of Pleistocene mammoth Mammuthus primigenius.</title>
        <authorList>
            <person name="Rogaev E.I."/>
            <person name="Moliaka Y.K."/>
            <person name="Malyarchuk B.A."/>
            <person name="Kondrashov F.A."/>
            <person name="Derenko M.V."/>
            <person name="Chumakov I."/>
            <person name="Grigorenko A.P."/>
        </authorList>
    </citation>
    <scope>NUCLEOTIDE SEQUENCE [GENOMIC DNA]</scope>
    <source>
        <tissue>Muscle</tissue>
    </source>
</reference>
<sequence>MERMDIIIWLLAVVIVLTTLMIFLHLKTLKIIRLLFPVSKELSKKSCVFPWKKKWTKNYPPSSMYP</sequence>
<organism>
    <name type="scientific">Mammuthus primigenius</name>
    <name type="common">Siberian woolly mammoth</name>
    <dbReference type="NCBI Taxonomy" id="37349"/>
    <lineage>
        <taxon>Eukaryota</taxon>
        <taxon>Metazoa</taxon>
        <taxon>Chordata</taxon>
        <taxon>Craniata</taxon>
        <taxon>Vertebrata</taxon>
        <taxon>Euteleostomi</taxon>
        <taxon>Mammalia</taxon>
        <taxon>Eutheria</taxon>
        <taxon>Afrotheria</taxon>
        <taxon>Proboscidea</taxon>
        <taxon>Elephantidae</taxon>
        <taxon>Mammuthus</taxon>
    </lineage>
</organism>
<keyword id="KW-0007">Acetylation</keyword>
<keyword id="KW-0066">ATP synthesis</keyword>
<keyword id="KW-0138">CF(0)</keyword>
<keyword id="KW-0952">Extinct organism protein</keyword>
<keyword id="KW-0375">Hydrogen ion transport</keyword>
<keyword id="KW-0406">Ion transport</keyword>
<keyword id="KW-0472">Membrane</keyword>
<keyword id="KW-0496">Mitochondrion</keyword>
<keyword id="KW-0812">Transmembrane</keyword>
<keyword id="KW-1133">Transmembrane helix</keyword>
<keyword id="KW-0813">Transport</keyword>
<accession>Q38PR8</accession>
<geneLocation type="mitochondrion"/>
<evidence type="ECO:0000250" key="1">
    <source>
        <dbReference type="UniProtKB" id="P03928"/>
    </source>
</evidence>
<evidence type="ECO:0000250" key="2">
    <source>
        <dbReference type="UniProtKB" id="P03930"/>
    </source>
</evidence>
<evidence type="ECO:0000250" key="3">
    <source>
        <dbReference type="UniProtKB" id="P19483"/>
    </source>
</evidence>
<evidence type="ECO:0000255" key="4"/>
<evidence type="ECO:0000305" key="5"/>